<feature type="signal peptide" evidence="1">
    <location>
        <begin position="1"/>
        <end position="43"/>
    </location>
</feature>
<feature type="chain" id="PRO_0000445700" description="Chemokine-like protein TAFA-5" evidence="1">
    <location>
        <begin position="44"/>
        <end position="132"/>
    </location>
</feature>
<feature type="glycosylation site" description="N-linked (GlcNAc...) asparagine" evidence="3">
    <location>
        <position position="113"/>
    </location>
</feature>
<comment type="function">
    <text evidence="2 4">Acts as a chemokine-like protein by regulating cell proliferation and migration through activation of G protein-coupled receptors (GPCRs), such as S1PR2 and FPR2 (PubMed:29453251). Stimulates chemotactic migration of macrophages mediated by the MAPK3/ERK1 and AKT1 pathway (By similarity). Blocks TNFSF11/RANKL-induced osteoclast formation from macrophages by inhibiting up-regulation of osteoclast fusogenic and differentiation genes (By similarity). Stimulation of macrophage migration and inhibition of osteoclast formation is mediated through the GPCR FPR2 (By similarity). Acts as an adipokine by negatively regulating vascular smooth muscle cell (VSMC) proliferation and migration in response to platelet-derived growth factor stimulation via GPCR S1PR2 and G protein GNA12/GNA13-transmitted RHOA signaling (PubMed:29453251). Inhibits injury-induced cell proliferation and neointima formation in the femoral arteries (PubMed:29453251).</text>
</comment>
<comment type="subcellular location">
    <subcellularLocation>
        <location evidence="4">Secreted</location>
    </subcellularLocation>
</comment>
<comment type="tissue specificity">
    <text evidence="4">Expressed in the epididymal adipose tissue, in aortic adventitial fibroblasts and low expression in vascular smooth muscle cells (at protein level) (PubMed:29453251). Expressed in the central nervous system, highly expressed in the hypothalamic paraventricular nucleus (PubMed:29453251).</text>
</comment>
<comment type="induction">
    <text evidence="4">Repressed in adipocytes after stimulation with Tnfa, Il6 and Ins1 (PubMed:29453251). Specifically down-regulated in the hypothalamic paraventricular nucleus following water deprivation (PubMed:29453251).</text>
</comment>
<comment type="similarity">
    <text evidence="5">Belongs to the TAFA family.</text>
</comment>
<sequence length="132" mass="14331">MAPSPRTSSRQDATALPSMSSTFWAFMILASLLIAYCSQLAAGTCEIVTLDRDSSQPRRTIARQTARCACRKGQIAGTTRARPACVDARIIKTKQWCDMLPCLEGEGCDLLINRSGWTCTQPGGRIKTTTVS</sequence>
<dbReference type="EMBL" id="AABR07058626">
    <property type="status" value="NOT_ANNOTATED_CDS"/>
    <property type="molecule type" value="Genomic_DNA"/>
</dbReference>
<dbReference type="EMBL" id="AABR07058627">
    <property type="status" value="NOT_ANNOTATED_CDS"/>
    <property type="molecule type" value="Genomic_DNA"/>
</dbReference>
<dbReference type="EMBL" id="AABR07058628">
    <property type="status" value="NOT_ANNOTATED_CDS"/>
    <property type="molecule type" value="Genomic_DNA"/>
</dbReference>
<dbReference type="EMBL" id="AABR07058629">
    <property type="status" value="NOT_ANNOTATED_CDS"/>
    <property type="molecule type" value="Genomic_DNA"/>
</dbReference>
<dbReference type="EMBL" id="AABR07058630">
    <property type="status" value="NOT_ANNOTATED_CDS"/>
    <property type="molecule type" value="Genomic_DNA"/>
</dbReference>
<dbReference type="EMBL" id="AABR07058631">
    <property type="status" value="NOT_ANNOTATED_CDS"/>
    <property type="molecule type" value="Genomic_DNA"/>
</dbReference>
<dbReference type="EMBL" id="AABR07058632">
    <property type="status" value="NOT_ANNOTATED_CDS"/>
    <property type="molecule type" value="Genomic_DNA"/>
</dbReference>
<dbReference type="RefSeq" id="NP_001178920.1">
    <property type="nucleotide sequence ID" value="NM_001191991.1"/>
</dbReference>
<dbReference type="FunCoup" id="M0R7X9">
    <property type="interactions" value="852"/>
</dbReference>
<dbReference type="STRING" id="10116.ENSRNOP00000065567"/>
<dbReference type="GlyCosmos" id="M0R7X9">
    <property type="glycosylation" value="1 site, No reported glycans"/>
</dbReference>
<dbReference type="GlyGen" id="M0R7X9">
    <property type="glycosylation" value="1 site"/>
</dbReference>
<dbReference type="PhosphoSitePlus" id="M0R7X9"/>
<dbReference type="PaxDb" id="10116-ENSRNOP00000065567"/>
<dbReference type="Ensembl" id="ENSRNOT00000074625.3">
    <property type="protein sequence ID" value="ENSRNOP00000065567.1"/>
    <property type="gene ID" value="ENSRNOG00000049349.3"/>
</dbReference>
<dbReference type="GeneID" id="500915"/>
<dbReference type="KEGG" id="rno:500915"/>
<dbReference type="AGR" id="RGD:1562115"/>
<dbReference type="CTD" id="25817"/>
<dbReference type="RGD" id="1562115">
    <property type="gene designation" value="Tafa5"/>
</dbReference>
<dbReference type="eggNOG" id="ENOG502RZT2">
    <property type="taxonomic scope" value="Eukaryota"/>
</dbReference>
<dbReference type="GeneTree" id="ENSGT00940000160682"/>
<dbReference type="HOGENOM" id="CLU_126078_5_0_1"/>
<dbReference type="InParanoid" id="M0R7X9"/>
<dbReference type="OMA" id="ARCACHK"/>
<dbReference type="OrthoDB" id="8957936at2759"/>
<dbReference type="PRO" id="PR:M0R7X9"/>
<dbReference type="Proteomes" id="UP000002494">
    <property type="component" value="Chromosome 7"/>
</dbReference>
<dbReference type="Bgee" id="ENSRNOG00000049349">
    <property type="expression patterns" value="Expressed in frontal cortex and 15 other cell types or tissues"/>
</dbReference>
<dbReference type="GO" id="GO:0005737">
    <property type="term" value="C:cytoplasm"/>
    <property type="evidence" value="ECO:0000266"/>
    <property type="project" value="RGD"/>
</dbReference>
<dbReference type="GO" id="GO:0005615">
    <property type="term" value="C:extracellular space"/>
    <property type="evidence" value="ECO:0000314"/>
    <property type="project" value="MGI"/>
</dbReference>
<dbReference type="GO" id="GO:0005125">
    <property type="term" value="F:cytokine activity"/>
    <property type="evidence" value="ECO:0007669"/>
    <property type="project" value="UniProtKB-KW"/>
</dbReference>
<dbReference type="GO" id="GO:0001664">
    <property type="term" value="F:G protein-coupled receptor binding"/>
    <property type="evidence" value="ECO:0000266"/>
    <property type="project" value="RGD"/>
</dbReference>
<dbReference type="GO" id="GO:0048018">
    <property type="term" value="F:receptor ligand activity"/>
    <property type="evidence" value="ECO:0000314"/>
    <property type="project" value="MGI"/>
</dbReference>
<dbReference type="GO" id="GO:0007186">
    <property type="term" value="P:G protein-coupled receptor signaling pathway"/>
    <property type="evidence" value="ECO:0000314"/>
    <property type="project" value="MGI"/>
</dbReference>
<dbReference type="GO" id="GO:1904753">
    <property type="term" value="P:negative regulation of vascular associated smooth muscle cell migration"/>
    <property type="evidence" value="ECO:0000314"/>
    <property type="project" value="MGI"/>
</dbReference>
<dbReference type="GO" id="GO:1904706">
    <property type="term" value="P:negative regulation of vascular associated smooth muscle cell proliferation"/>
    <property type="evidence" value="ECO:0000314"/>
    <property type="project" value="MGI"/>
</dbReference>
<dbReference type="GO" id="GO:0061044">
    <property type="term" value="P:negative regulation of vascular wound healing"/>
    <property type="evidence" value="ECO:0000314"/>
    <property type="project" value="MGI"/>
</dbReference>
<dbReference type="InterPro" id="IPR020350">
    <property type="entry name" value="Chemokine-like_TAFA"/>
</dbReference>
<dbReference type="InterPro" id="IPR040329">
    <property type="entry name" value="TAFA-5"/>
</dbReference>
<dbReference type="PANTHER" id="PTHR31878:SF0">
    <property type="entry name" value="CHEMOKINE-LIKE PROTEIN TAFA-5"/>
    <property type="match status" value="1"/>
</dbReference>
<dbReference type="PANTHER" id="PTHR31878">
    <property type="entry name" value="CHEMOKINE-LIKE PROTEIN TAFA-5-RELATED"/>
    <property type="match status" value="1"/>
</dbReference>
<dbReference type="Pfam" id="PF12020">
    <property type="entry name" value="TAFA"/>
    <property type="match status" value="1"/>
</dbReference>
<protein>
    <recommendedName>
        <fullName>Chemokine-like protein TAFA-5</fullName>
    </recommendedName>
</protein>
<evidence type="ECO:0000250" key="1">
    <source>
        <dbReference type="UniProtKB" id="Q7Z5A7"/>
    </source>
</evidence>
<evidence type="ECO:0000250" key="2">
    <source>
        <dbReference type="UniProtKB" id="Q91WE9"/>
    </source>
</evidence>
<evidence type="ECO:0000255" key="3">
    <source>
        <dbReference type="PROSITE-ProRule" id="PRU00498"/>
    </source>
</evidence>
<evidence type="ECO:0000269" key="4">
    <source>
    </source>
</evidence>
<evidence type="ECO:0000305" key="5"/>
<evidence type="ECO:0000312" key="6">
    <source>
        <dbReference type="Proteomes" id="UP000002494"/>
    </source>
</evidence>
<evidence type="ECO:0000312" key="7">
    <source>
        <dbReference type="RGD" id="1562115"/>
    </source>
</evidence>
<name>TAFA5_RAT</name>
<gene>
    <name type="primary">Tafa5</name>
    <name evidence="7" type="synonym">Fam19a5</name>
</gene>
<reference evidence="6" key="1">
    <citation type="journal article" date="2004" name="Nature">
        <title>Genome sequence of the Brown Norway rat yields insights into mammalian evolution.</title>
        <authorList>
            <person name="Gibbs R.A."/>
            <person name="Weinstock G.M."/>
            <person name="Metzker M.L."/>
            <person name="Muzny D.M."/>
            <person name="Sodergren E.J."/>
            <person name="Scherer S."/>
            <person name="Scott G."/>
            <person name="Steffen D."/>
            <person name="Worley K.C."/>
            <person name="Burch P.E."/>
            <person name="Okwuonu G."/>
            <person name="Hines S."/>
            <person name="Lewis L."/>
            <person name="Deramo C."/>
            <person name="Delgado O."/>
            <person name="Dugan-Rocha S."/>
            <person name="Miner G."/>
            <person name="Morgan M."/>
            <person name="Hawes A."/>
            <person name="Gill R."/>
            <person name="Holt R.A."/>
            <person name="Adams M.D."/>
            <person name="Amanatides P.G."/>
            <person name="Baden-Tillson H."/>
            <person name="Barnstead M."/>
            <person name="Chin S."/>
            <person name="Evans C.A."/>
            <person name="Ferriera S."/>
            <person name="Fosler C."/>
            <person name="Glodek A."/>
            <person name="Gu Z."/>
            <person name="Jennings D."/>
            <person name="Kraft C.L."/>
            <person name="Nguyen T."/>
            <person name="Pfannkoch C.M."/>
            <person name="Sitter C."/>
            <person name="Sutton G.G."/>
            <person name="Venter J.C."/>
            <person name="Woodage T."/>
            <person name="Smith D."/>
            <person name="Lee H.-M."/>
            <person name="Gustafson E."/>
            <person name="Cahill P."/>
            <person name="Kana A."/>
            <person name="Doucette-Stamm L."/>
            <person name="Weinstock K."/>
            <person name="Fechtel K."/>
            <person name="Weiss R.B."/>
            <person name="Dunn D.M."/>
            <person name="Green E.D."/>
            <person name="Blakesley R.W."/>
            <person name="Bouffard G.G."/>
            <person name="De Jong P.J."/>
            <person name="Osoegawa K."/>
            <person name="Zhu B."/>
            <person name="Marra M."/>
            <person name="Schein J."/>
            <person name="Bosdet I."/>
            <person name="Fjell C."/>
            <person name="Jones S."/>
            <person name="Krzywinski M."/>
            <person name="Mathewson C."/>
            <person name="Siddiqui A."/>
            <person name="Wye N."/>
            <person name="McPherson J."/>
            <person name="Zhao S."/>
            <person name="Fraser C.M."/>
            <person name="Shetty J."/>
            <person name="Shatsman S."/>
            <person name="Geer K."/>
            <person name="Chen Y."/>
            <person name="Abramzon S."/>
            <person name="Nierman W.C."/>
            <person name="Havlak P.H."/>
            <person name="Chen R."/>
            <person name="Durbin K.J."/>
            <person name="Egan A."/>
            <person name="Ren Y."/>
            <person name="Song X.-Z."/>
            <person name="Li B."/>
            <person name="Liu Y."/>
            <person name="Qin X."/>
            <person name="Cawley S."/>
            <person name="Cooney A.J."/>
            <person name="D'Souza L.M."/>
            <person name="Martin K."/>
            <person name="Wu J.Q."/>
            <person name="Gonzalez-Garay M.L."/>
            <person name="Jackson A.R."/>
            <person name="Kalafus K.J."/>
            <person name="McLeod M.P."/>
            <person name="Milosavljevic A."/>
            <person name="Virk D."/>
            <person name="Volkov A."/>
            <person name="Wheeler D.A."/>
            <person name="Zhang Z."/>
            <person name="Bailey J.A."/>
            <person name="Eichler E.E."/>
            <person name="Tuzun E."/>
            <person name="Birney E."/>
            <person name="Mongin E."/>
            <person name="Ureta-Vidal A."/>
            <person name="Woodwark C."/>
            <person name="Zdobnov E."/>
            <person name="Bork P."/>
            <person name="Suyama M."/>
            <person name="Torrents D."/>
            <person name="Alexandersson M."/>
            <person name="Trask B.J."/>
            <person name="Young J.M."/>
            <person name="Huang H."/>
            <person name="Wang H."/>
            <person name="Xing H."/>
            <person name="Daniels S."/>
            <person name="Gietzen D."/>
            <person name="Schmidt J."/>
            <person name="Stevens K."/>
            <person name="Vitt U."/>
            <person name="Wingrove J."/>
            <person name="Camara F."/>
            <person name="Mar Alba M."/>
            <person name="Abril J.F."/>
            <person name="Guigo R."/>
            <person name="Smit A."/>
            <person name="Dubchak I."/>
            <person name="Rubin E.M."/>
            <person name="Couronne O."/>
            <person name="Poliakov A."/>
            <person name="Huebner N."/>
            <person name="Ganten D."/>
            <person name="Goesele C."/>
            <person name="Hummel O."/>
            <person name="Kreitler T."/>
            <person name="Lee Y.-A."/>
            <person name="Monti J."/>
            <person name="Schulz H."/>
            <person name="Zimdahl H."/>
            <person name="Himmelbauer H."/>
            <person name="Lehrach H."/>
            <person name="Jacob H.J."/>
            <person name="Bromberg S."/>
            <person name="Gullings-Handley J."/>
            <person name="Jensen-Seaman M.I."/>
            <person name="Kwitek A.E."/>
            <person name="Lazar J."/>
            <person name="Pasko D."/>
            <person name="Tonellato P.J."/>
            <person name="Twigger S."/>
            <person name="Ponting C.P."/>
            <person name="Duarte J.M."/>
            <person name="Rice S."/>
            <person name="Goodstadt L."/>
            <person name="Beatson S.A."/>
            <person name="Emes R.D."/>
            <person name="Winter E.E."/>
            <person name="Webber C."/>
            <person name="Brandt P."/>
            <person name="Nyakatura G."/>
            <person name="Adetobi M."/>
            <person name="Chiaromonte F."/>
            <person name="Elnitski L."/>
            <person name="Eswara P."/>
            <person name="Hardison R.C."/>
            <person name="Hou M."/>
            <person name="Kolbe D."/>
            <person name="Makova K."/>
            <person name="Miller W."/>
            <person name="Nekrutenko A."/>
            <person name="Riemer C."/>
            <person name="Schwartz S."/>
            <person name="Taylor J."/>
            <person name="Yang S."/>
            <person name="Zhang Y."/>
            <person name="Lindpaintner K."/>
            <person name="Andrews T.D."/>
            <person name="Caccamo M."/>
            <person name="Clamp M."/>
            <person name="Clarke L."/>
            <person name="Curwen V."/>
            <person name="Durbin R.M."/>
            <person name="Eyras E."/>
            <person name="Searle S.M."/>
            <person name="Cooper G.M."/>
            <person name="Batzoglou S."/>
            <person name="Brudno M."/>
            <person name="Sidow A."/>
            <person name="Stone E.A."/>
            <person name="Payseur B.A."/>
            <person name="Bourque G."/>
            <person name="Lopez-Otin C."/>
            <person name="Puente X.S."/>
            <person name="Chakrabarti K."/>
            <person name="Chatterji S."/>
            <person name="Dewey C."/>
            <person name="Pachter L."/>
            <person name="Bray N."/>
            <person name="Yap V.B."/>
            <person name="Caspi A."/>
            <person name="Tesler G."/>
            <person name="Pevzner P.A."/>
            <person name="Haussler D."/>
            <person name="Roskin K.M."/>
            <person name="Baertsch R."/>
            <person name="Clawson H."/>
            <person name="Furey T.S."/>
            <person name="Hinrichs A.S."/>
            <person name="Karolchik D."/>
            <person name="Kent W.J."/>
            <person name="Rosenbloom K.R."/>
            <person name="Trumbower H."/>
            <person name="Weirauch M."/>
            <person name="Cooper D.N."/>
            <person name="Stenson P.D."/>
            <person name="Ma B."/>
            <person name="Brent M."/>
            <person name="Arumugam M."/>
            <person name="Shteynberg D."/>
            <person name="Copley R.R."/>
            <person name="Taylor M.S."/>
            <person name="Riethman H."/>
            <person name="Mudunuri U."/>
            <person name="Peterson J."/>
            <person name="Guyer M."/>
            <person name="Felsenfeld A."/>
            <person name="Old S."/>
            <person name="Mockrin S."/>
            <person name="Collins F.S."/>
        </authorList>
    </citation>
    <scope>NUCLEOTIDE SEQUENCE [LARGE SCALE GENOMIC DNA]</scope>
    <source>
        <strain evidence="6">Brown Norway</strain>
    </source>
</reference>
<reference key="2">
    <citation type="journal article" date="2008" name="Brain Res.">
        <title>The putative neuropeptide TAFA5 is expressed in the hypothalamic paraventricular nucleus and is regulated by dehydration.</title>
        <authorList>
            <person name="Paulsen S.J."/>
            <person name="Christensen M.T."/>
            <person name="Vrang N."/>
            <person name="Larsen L.K."/>
        </authorList>
    </citation>
    <scope>TISSUE SPECIFICITY</scope>
    <scope>INDUCTION BY WATER DEPRIVATION</scope>
</reference>
<reference evidence="5" key="3">
    <citation type="journal article" date="2018" name="Circulation">
        <title>Novel Adipokine, FAM19A5, Inhibits Neointima Formation After Injury Through Sphingosine-1-Phosphate Receptor 2.</title>
        <authorList>
            <person name="Wang Y."/>
            <person name="Chen D."/>
            <person name="Zhang Y."/>
            <person name="Wang P."/>
            <person name="Zheng C."/>
            <person name="Zhang S."/>
            <person name="Yu B."/>
            <person name="Zhang L."/>
            <person name="Zhao G."/>
            <person name="Ma B."/>
            <person name="Cai Z."/>
            <person name="Xie N."/>
            <person name="Huang S."/>
            <person name="Liu Z."/>
            <person name="Mo X."/>
            <person name="Guan Y."/>
            <person name="Wang X."/>
            <person name="Fu Y."/>
            <person name="Ma D."/>
            <person name="Wang Y."/>
            <person name="Kong W."/>
        </authorList>
    </citation>
    <scope>FUNCTION</scope>
    <scope>SUBCELLULAR LOCATION</scope>
    <scope>TISSUE SPECIFICITY</scope>
    <scope>INDUCTION</scope>
</reference>
<accession>M0R7X9</accession>
<organism evidence="6">
    <name type="scientific">Rattus norvegicus</name>
    <name type="common">Rat</name>
    <dbReference type="NCBI Taxonomy" id="10116"/>
    <lineage>
        <taxon>Eukaryota</taxon>
        <taxon>Metazoa</taxon>
        <taxon>Chordata</taxon>
        <taxon>Craniata</taxon>
        <taxon>Vertebrata</taxon>
        <taxon>Euteleostomi</taxon>
        <taxon>Mammalia</taxon>
        <taxon>Eutheria</taxon>
        <taxon>Euarchontoglires</taxon>
        <taxon>Glires</taxon>
        <taxon>Rodentia</taxon>
        <taxon>Myomorpha</taxon>
        <taxon>Muroidea</taxon>
        <taxon>Muridae</taxon>
        <taxon>Murinae</taxon>
        <taxon>Rattus</taxon>
    </lineage>
</organism>
<proteinExistence type="evidence at protein level"/>
<keyword id="KW-0202">Cytokine</keyword>
<keyword id="KW-0325">Glycoprotein</keyword>
<keyword id="KW-1185">Reference proteome</keyword>
<keyword id="KW-0964">Secreted</keyword>
<keyword id="KW-0732">Signal</keyword>